<proteinExistence type="inferred from homology"/>
<evidence type="ECO:0000255" key="1">
    <source>
        <dbReference type="HAMAP-Rule" id="MF_01037"/>
    </source>
</evidence>
<sequence>MIVNIIGAGLAGVEVAWKLLNTGVKVRIFEQKPKKFSTVHKNPNFGELVCSNSLKSESLNNAEGILKAEMNILDSLVLKCAYRCRVPAGKALAVDRDKFSQCITEHILSFDNVEVIREEIKSIDLKEDEIWVVATGPTTDGEFANWLSNLTGGFLNFFDAVAPIISGDSIDFNKCFFADRYGKGTSDYINCPMTKEEYERFYKELINAEKIEMEDFDRKLLFERCQPIEEIAKSGEKSLLFGPLRPVGLIDPRTGKMPYAIIQLRKEDENGNMYNLVGFQTRLKWPQQKRIIRLIPGLENAEILRYGVMHRNTYIDSPKVLDEFLRHKKFQNLFFAGQITGVEGYVESAATGIFVGINILRFLEKKELVALPTKTMLGALLNYITTSKQLKPMYANFGLVDVKMGKKEKREKLHKICLEEMKKFLYMLK</sequence>
<name>TRMFO_THEM4</name>
<protein>
    <recommendedName>
        <fullName evidence="1">Methylenetetrahydrofolate--tRNA-(uracil-5-)-methyltransferase TrmFO</fullName>
        <ecNumber evidence="1">2.1.1.74</ecNumber>
    </recommendedName>
    <alternativeName>
        <fullName evidence="1">Folate-dependent tRNA (uracil-5-)-methyltransferase</fullName>
    </alternativeName>
    <alternativeName>
        <fullName evidence="1">Folate-dependent tRNA(M-5-U54)-methyltransferase</fullName>
    </alternativeName>
</protein>
<dbReference type="EC" id="2.1.1.74" evidence="1"/>
<dbReference type="EMBL" id="CP000716">
    <property type="protein sequence ID" value="ABR30109.1"/>
    <property type="molecule type" value="Genomic_DNA"/>
</dbReference>
<dbReference type="RefSeq" id="WP_012056470.1">
    <property type="nucleotide sequence ID" value="NC_009616.1"/>
</dbReference>
<dbReference type="SMR" id="A6LJK8"/>
<dbReference type="STRING" id="391009.Tmel_0235"/>
<dbReference type="KEGG" id="tme:Tmel_0235"/>
<dbReference type="eggNOG" id="COG1206">
    <property type="taxonomic scope" value="Bacteria"/>
</dbReference>
<dbReference type="HOGENOM" id="CLU_033057_1_0_0"/>
<dbReference type="OrthoDB" id="9803114at2"/>
<dbReference type="Proteomes" id="UP000001110">
    <property type="component" value="Chromosome"/>
</dbReference>
<dbReference type="GO" id="GO:0005829">
    <property type="term" value="C:cytosol"/>
    <property type="evidence" value="ECO:0007669"/>
    <property type="project" value="TreeGrafter"/>
</dbReference>
<dbReference type="GO" id="GO:0050660">
    <property type="term" value="F:flavin adenine dinucleotide binding"/>
    <property type="evidence" value="ECO:0007669"/>
    <property type="project" value="UniProtKB-UniRule"/>
</dbReference>
<dbReference type="GO" id="GO:0047151">
    <property type="term" value="F:tRNA (uracil(54)-C5)-methyltransferase activity, 5,10-methylenetetrahydrofolate-dependent"/>
    <property type="evidence" value="ECO:0007669"/>
    <property type="project" value="UniProtKB-UniRule"/>
</dbReference>
<dbReference type="GO" id="GO:0030488">
    <property type="term" value="P:tRNA methylation"/>
    <property type="evidence" value="ECO:0007669"/>
    <property type="project" value="TreeGrafter"/>
</dbReference>
<dbReference type="GO" id="GO:0002098">
    <property type="term" value="P:tRNA wobble uridine modification"/>
    <property type="evidence" value="ECO:0007669"/>
    <property type="project" value="TreeGrafter"/>
</dbReference>
<dbReference type="Gene3D" id="3.50.50.60">
    <property type="entry name" value="FAD/NAD(P)-binding domain"/>
    <property type="match status" value="2"/>
</dbReference>
<dbReference type="HAMAP" id="MF_01037">
    <property type="entry name" value="TrmFO"/>
    <property type="match status" value="1"/>
</dbReference>
<dbReference type="InterPro" id="IPR036188">
    <property type="entry name" value="FAD/NAD-bd_sf"/>
</dbReference>
<dbReference type="InterPro" id="IPR002218">
    <property type="entry name" value="MnmG-rel"/>
</dbReference>
<dbReference type="InterPro" id="IPR040131">
    <property type="entry name" value="MnmG_N"/>
</dbReference>
<dbReference type="InterPro" id="IPR004417">
    <property type="entry name" value="TrmFO"/>
</dbReference>
<dbReference type="NCBIfam" id="TIGR00137">
    <property type="entry name" value="gid_trmFO"/>
    <property type="match status" value="1"/>
</dbReference>
<dbReference type="NCBIfam" id="NF003739">
    <property type="entry name" value="PRK05335.1"/>
    <property type="match status" value="1"/>
</dbReference>
<dbReference type="PANTHER" id="PTHR11806">
    <property type="entry name" value="GLUCOSE INHIBITED DIVISION PROTEIN A"/>
    <property type="match status" value="1"/>
</dbReference>
<dbReference type="PANTHER" id="PTHR11806:SF2">
    <property type="entry name" value="METHYLENETETRAHYDROFOLATE--TRNA-(URACIL-5-)-METHYLTRANSFERASE TRMFO"/>
    <property type="match status" value="1"/>
</dbReference>
<dbReference type="Pfam" id="PF01134">
    <property type="entry name" value="GIDA"/>
    <property type="match status" value="1"/>
</dbReference>
<dbReference type="SUPFAM" id="SSF51905">
    <property type="entry name" value="FAD/NAD(P)-binding domain"/>
    <property type="match status" value="1"/>
</dbReference>
<reference key="1">
    <citation type="submission" date="2007-05" db="EMBL/GenBank/DDBJ databases">
        <title>Complete sequence of Thermosipho melanesiensis BI429.</title>
        <authorList>
            <consortium name="US DOE Joint Genome Institute"/>
            <person name="Copeland A."/>
            <person name="Lucas S."/>
            <person name="Lapidus A."/>
            <person name="Barry K."/>
            <person name="Glavina del Rio T."/>
            <person name="Dalin E."/>
            <person name="Tice H."/>
            <person name="Pitluck S."/>
            <person name="Chertkov O."/>
            <person name="Brettin T."/>
            <person name="Bruce D."/>
            <person name="Detter J.C."/>
            <person name="Han C."/>
            <person name="Schmutz J."/>
            <person name="Larimer F."/>
            <person name="Land M."/>
            <person name="Hauser L."/>
            <person name="Kyrpides N."/>
            <person name="Mikhailova N."/>
            <person name="Nelson K."/>
            <person name="Gogarten J.P."/>
            <person name="Noll K."/>
            <person name="Richardson P."/>
        </authorList>
    </citation>
    <scope>NUCLEOTIDE SEQUENCE [LARGE SCALE GENOMIC DNA]</scope>
    <source>
        <strain>DSM 12029 / CIP 104789 / BI429</strain>
    </source>
</reference>
<organism>
    <name type="scientific">Thermosipho melanesiensis (strain DSM 12029 / CIP 104789 / BI429)</name>
    <dbReference type="NCBI Taxonomy" id="391009"/>
    <lineage>
        <taxon>Bacteria</taxon>
        <taxon>Thermotogati</taxon>
        <taxon>Thermotogota</taxon>
        <taxon>Thermotogae</taxon>
        <taxon>Thermotogales</taxon>
        <taxon>Fervidobacteriaceae</taxon>
        <taxon>Thermosipho</taxon>
    </lineage>
</organism>
<gene>
    <name evidence="1" type="primary">trmFO</name>
    <name type="ordered locus">Tmel_0235</name>
</gene>
<keyword id="KW-0963">Cytoplasm</keyword>
<keyword id="KW-0274">FAD</keyword>
<keyword id="KW-0285">Flavoprotein</keyword>
<keyword id="KW-0489">Methyltransferase</keyword>
<keyword id="KW-0520">NAD</keyword>
<keyword id="KW-0521">NADP</keyword>
<keyword id="KW-0808">Transferase</keyword>
<keyword id="KW-0819">tRNA processing</keyword>
<accession>A6LJK8</accession>
<feature type="chain" id="PRO_0000346415" description="Methylenetetrahydrofolate--tRNA-(uracil-5-)-methyltransferase TrmFO">
    <location>
        <begin position="1"/>
        <end position="429"/>
    </location>
</feature>
<feature type="binding site" evidence="1">
    <location>
        <begin position="7"/>
        <end position="12"/>
    </location>
    <ligand>
        <name>FAD</name>
        <dbReference type="ChEBI" id="CHEBI:57692"/>
    </ligand>
</feature>
<comment type="function">
    <text evidence="1">Catalyzes the folate-dependent formation of 5-methyl-uridine at position 54 (M-5-U54) in all tRNAs.</text>
</comment>
<comment type="catalytic activity">
    <reaction evidence="1">
        <text>uridine(54) in tRNA + (6R)-5,10-methylene-5,6,7,8-tetrahydrofolate + NADH + H(+) = 5-methyluridine(54) in tRNA + (6S)-5,6,7,8-tetrahydrofolate + NAD(+)</text>
        <dbReference type="Rhea" id="RHEA:16873"/>
        <dbReference type="Rhea" id="RHEA-COMP:10167"/>
        <dbReference type="Rhea" id="RHEA-COMP:10193"/>
        <dbReference type="ChEBI" id="CHEBI:15378"/>
        <dbReference type="ChEBI" id="CHEBI:15636"/>
        <dbReference type="ChEBI" id="CHEBI:57453"/>
        <dbReference type="ChEBI" id="CHEBI:57540"/>
        <dbReference type="ChEBI" id="CHEBI:57945"/>
        <dbReference type="ChEBI" id="CHEBI:65315"/>
        <dbReference type="ChEBI" id="CHEBI:74447"/>
        <dbReference type="EC" id="2.1.1.74"/>
    </reaction>
</comment>
<comment type="catalytic activity">
    <reaction evidence="1">
        <text>uridine(54) in tRNA + (6R)-5,10-methylene-5,6,7,8-tetrahydrofolate + NADPH + H(+) = 5-methyluridine(54) in tRNA + (6S)-5,6,7,8-tetrahydrofolate + NADP(+)</text>
        <dbReference type="Rhea" id="RHEA:62372"/>
        <dbReference type="Rhea" id="RHEA-COMP:10167"/>
        <dbReference type="Rhea" id="RHEA-COMP:10193"/>
        <dbReference type="ChEBI" id="CHEBI:15378"/>
        <dbReference type="ChEBI" id="CHEBI:15636"/>
        <dbReference type="ChEBI" id="CHEBI:57453"/>
        <dbReference type="ChEBI" id="CHEBI:57783"/>
        <dbReference type="ChEBI" id="CHEBI:58349"/>
        <dbReference type="ChEBI" id="CHEBI:65315"/>
        <dbReference type="ChEBI" id="CHEBI:74447"/>
        <dbReference type="EC" id="2.1.1.74"/>
    </reaction>
</comment>
<comment type="cofactor">
    <cofactor evidence="1">
        <name>FAD</name>
        <dbReference type="ChEBI" id="CHEBI:57692"/>
    </cofactor>
</comment>
<comment type="subcellular location">
    <subcellularLocation>
        <location evidence="1">Cytoplasm</location>
    </subcellularLocation>
</comment>
<comment type="similarity">
    <text evidence="1">Belongs to the MnmG family. TrmFO subfamily.</text>
</comment>